<dbReference type="EC" id="4.1.1.48" evidence="1"/>
<dbReference type="EMBL" id="CP000096">
    <property type="protein sequence ID" value="ABB24504.1"/>
    <property type="molecule type" value="Genomic_DNA"/>
</dbReference>
<dbReference type="RefSeq" id="WP_011358376.1">
    <property type="nucleotide sequence ID" value="NC_007512.1"/>
</dbReference>
<dbReference type="SMR" id="Q3B2C7"/>
<dbReference type="STRING" id="319225.Plut_1650"/>
<dbReference type="KEGG" id="plt:Plut_1650"/>
<dbReference type="eggNOG" id="COG0134">
    <property type="taxonomic scope" value="Bacteria"/>
</dbReference>
<dbReference type="HOGENOM" id="CLU_034247_2_0_10"/>
<dbReference type="OrthoDB" id="9804217at2"/>
<dbReference type="UniPathway" id="UPA00035">
    <property type="reaction ID" value="UER00043"/>
</dbReference>
<dbReference type="Proteomes" id="UP000002709">
    <property type="component" value="Chromosome"/>
</dbReference>
<dbReference type="GO" id="GO:0004425">
    <property type="term" value="F:indole-3-glycerol-phosphate synthase activity"/>
    <property type="evidence" value="ECO:0007669"/>
    <property type="project" value="UniProtKB-UniRule"/>
</dbReference>
<dbReference type="GO" id="GO:0004640">
    <property type="term" value="F:phosphoribosylanthranilate isomerase activity"/>
    <property type="evidence" value="ECO:0007669"/>
    <property type="project" value="TreeGrafter"/>
</dbReference>
<dbReference type="GO" id="GO:0000162">
    <property type="term" value="P:L-tryptophan biosynthetic process"/>
    <property type="evidence" value="ECO:0007669"/>
    <property type="project" value="UniProtKB-UniRule"/>
</dbReference>
<dbReference type="CDD" id="cd00331">
    <property type="entry name" value="IGPS"/>
    <property type="match status" value="1"/>
</dbReference>
<dbReference type="FunFam" id="3.20.20.70:FF:000024">
    <property type="entry name" value="Indole-3-glycerol phosphate synthase"/>
    <property type="match status" value="1"/>
</dbReference>
<dbReference type="Gene3D" id="3.20.20.70">
    <property type="entry name" value="Aldolase class I"/>
    <property type="match status" value="1"/>
</dbReference>
<dbReference type="HAMAP" id="MF_00134_B">
    <property type="entry name" value="IGPS_B"/>
    <property type="match status" value="1"/>
</dbReference>
<dbReference type="InterPro" id="IPR013785">
    <property type="entry name" value="Aldolase_TIM"/>
</dbReference>
<dbReference type="InterPro" id="IPR045186">
    <property type="entry name" value="Indole-3-glycerol_P_synth"/>
</dbReference>
<dbReference type="InterPro" id="IPR013798">
    <property type="entry name" value="Indole-3-glycerol_P_synth_dom"/>
</dbReference>
<dbReference type="InterPro" id="IPR001468">
    <property type="entry name" value="Indole-3-GlycerolPSynthase_CS"/>
</dbReference>
<dbReference type="InterPro" id="IPR011060">
    <property type="entry name" value="RibuloseP-bd_barrel"/>
</dbReference>
<dbReference type="NCBIfam" id="NF001377">
    <property type="entry name" value="PRK00278.2-4"/>
    <property type="match status" value="1"/>
</dbReference>
<dbReference type="PANTHER" id="PTHR22854:SF2">
    <property type="entry name" value="INDOLE-3-GLYCEROL-PHOSPHATE SYNTHASE"/>
    <property type="match status" value="1"/>
</dbReference>
<dbReference type="PANTHER" id="PTHR22854">
    <property type="entry name" value="TRYPTOPHAN BIOSYNTHESIS PROTEIN"/>
    <property type="match status" value="1"/>
</dbReference>
<dbReference type="Pfam" id="PF00218">
    <property type="entry name" value="IGPS"/>
    <property type="match status" value="1"/>
</dbReference>
<dbReference type="SUPFAM" id="SSF51366">
    <property type="entry name" value="Ribulose-phoshate binding barrel"/>
    <property type="match status" value="1"/>
</dbReference>
<dbReference type="PROSITE" id="PS00614">
    <property type="entry name" value="IGPS"/>
    <property type="match status" value="1"/>
</dbReference>
<protein>
    <recommendedName>
        <fullName evidence="1">Indole-3-glycerol phosphate synthase</fullName>
        <shortName evidence="1">IGPS</shortName>
        <ecNumber evidence="1">4.1.1.48</ecNumber>
    </recommendedName>
</protein>
<gene>
    <name evidence="1" type="primary">trpC</name>
    <name type="ordered locus">Plut_1650</name>
</gene>
<keyword id="KW-0028">Amino-acid biosynthesis</keyword>
<keyword id="KW-0057">Aromatic amino acid biosynthesis</keyword>
<keyword id="KW-0210">Decarboxylase</keyword>
<keyword id="KW-0456">Lyase</keyword>
<keyword id="KW-1185">Reference proteome</keyword>
<keyword id="KW-0822">Tryptophan biosynthesis</keyword>
<reference key="1">
    <citation type="submission" date="2005-08" db="EMBL/GenBank/DDBJ databases">
        <title>Complete sequence of Pelodictyon luteolum DSM 273.</title>
        <authorList>
            <consortium name="US DOE Joint Genome Institute"/>
            <person name="Copeland A."/>
            <person name="Lucas S."/>
            <person name="Lapidus A."/>
            <person name="Barry K."/>
            <person name="Detter J.C."/>
            <person name="Glavina T."/>
            <person name="Hammon N."/>
            <person name="Israni S."/>
            <person name="Pitluck S."/>
            <person name="Bryant D."/>
            <person name="Schmutz J."/>
            <person name="Larimer F."/>
            <person name="Land M."/>
            <person name="Kyrpides N."/>
            <person name="Ivanova N."/>
            <person name="Richardson P."/>
        </authorList>
    </citation>
    <scope>NUCLEOTIDE SEQUENCE [LARGE SCALE GENOMIC DNA]</scope>
    <source>
        <strain>DSM 273 / BCRC 81028 / 2530</strain>
    </source>
</reference>
<accession>Q3B2C7</accession>
<evidence type="ECO:0000255" key="1">
    <source>
        <dbReference type="HAMAP-Rule" id="MF_00134"/>
    </source>
</evidence>
<feature type="chain" id="PRO_1000018516" description="Indole-3-glycerol phosphate synthase">
    <location>
        <begin position="1"/>
        <end position="262"/>
    </location>
</feature>
<name>TRPC_CHLL3</name>
<proteinExistence type="inferred from homology"/>
<organism>
    <name type="scientific">Chlorobium luteolum (strain DSM 273 / BCRC 81028 / 2530)</name>
    <name type="common">Pelodictyon luteolum</name>
    <dbReference type="NCBI Taxonomy" id="319225"/>
    <lineage>
        <taxon>Bacteria</taxon>
        <taxon>Pseudomonadati</taxon>
        <taxon>Chlorobiota</taxon>
        <taxon>Chlorobiia</taxon>
        <taxon>Chlorobiales</taxon>
        <taxon>Chlorobiaceae</taxon>
        <taxon>Chlorobium/Pelodictyon group</taxon>
        <taxon>Pelodictyon</taxon>
    </lineage>
</organism>
<sequence>MTYLAKILKEKRREVAAIKAERPLARYLELRSSLAPARGFQEALRGEDGRLRLIAEVKKASPSRGVIVHDFDPVRIALHYEEIGASALSVLTDRQFFQGSPDYLRAVSAAVRLPVLRKDFIVDESQIFESRLMGADAILLIVAALEPRQLRDYLQTASETGLDVLVEVHDRRELDTAAEEGATMIGVNNRNLKDFSVDPATSSDLRPFFPPDTIAVSESGLKTAGDIAHLRDAGFHAVLIGEGLQTSKELTGLTWPVSHSLS</sequence>
<comment type="catalytic activity">
    <reaction evidence="1">
        <text>1-(2-carboxyphenylamino)-1-deoxy-D-ribulose 5-phosphate + H(+) = (1S,2R)-1-C-(indol-3-yl)glycerol 3-phosphate + CO2 + H2O</text>
        <dbReference type="Rhea" id="RHEA:23476"/>
        <dbReference type="ChEBI" id="CHEBI:15377"/>
        <dbReference type="ChEBI" id="CHEBI:15378"/>
        <dbReference type="ChEBI" id="CHEBI:16526"/>
        <dbReference type="ChEBI" id="CHEBI:58613"/>
        <dbReference type="ChEBI" id="CHEBI:58866"/>
        <dbReference type="EC" id="4.1.1.48"/>
    </reaction>
</comment>
<comment type="pathway">
    <text evidence="1">Amino-acid biosynthesis; L-tryptophan biosynthesis; L-tryptophan from chorismate: step 4/5.</text>
</comment>
<comment type="similarity">
    <text evidence="1">Belongs to the TrpC family.</text>
</comment>